<accession>Q0G9W2</accession>
<reference key="1">
    <citation type="journal article" date="2006" name="BMC Genomics">
        <title>Complete plastid genome sequence of Daucus carota: implications for biotechnology and phylogeny of angiosperms.</title>
        <authorList>
            <person name="Ruhlman T."/>
            <person name="Lee S.-B."/>
            <person name="Jansen R.K."/>
            <person name="Hostetler J.B."/>
            <person name="Tallon L.J."/>
            <person name="Town C.D."/>
            <person name="Daniell H."/>
        </authorList>
    </citation>
    <scope>NUCLEOTIDE SEQUENCE [LARGE SCALE GENOMIC DNA]</scope>
    <source>
        <strain>cv. Danvers Half-long</strain>
    </source>
</reference>
<evidence type="ECO:0000255" key="1">
    <source>
        <dbReference type="HAMAP-Rule" id="MF_00458"/>
    </source>
</evidence>
<sequence>MIIRSPEPEVKILVDRDHIKTSFEEWARPGHFSRTLAKGPDTTTWIWNLHADAHDFDSHTSDLEEISRKVFSAHFGQLSIIFLWLSGMYFHGARFSNYEAWLSDPTHIGPSAQVVWPIVGQEILNGDVGGGFRGIQITSGFFQLWRASGITSELQLYCTAIGALIFAALMLFAGWFHYHKAAPKLAWFQDVESMLNHHLAGLLGLGSLSWAGHQVHVSLPINQFLNAGVDPKEIPLPHEFILNRDLLAQLYPSFAEGATPFFTLDWSKYSDFLTFRGGLDPVTGGLWLTDIAHHHLAIAILFLIAGHMYKTNWGIGHGLKDILEAHKGPFTGQGHKGLYEILTTSWHAQLSLNLAMLGSLTIIVAHHMYSMPPYPYLATDYGTQLSLFTHHMWIGGFLIVGAAAHAAIFMVRDYDPTTRYNDLLDRVLRHRDAIISHLNWACIFLGFHSFGLYIHNDTMSALGRPQDMFSDTAIQLQPVFAQWIQNTHALAPSATAPGATTSTSLTWGGGDLVAVGGKVALLPIPLGTADFLVHHIHAFTIHVTVLILLKGVLFARSSRLIPDKANLGFRFPCDGPGRGGTCQVSAWDHVFLGLFWMYNAISVVIFHFSWKMQSDVWGSISDQGVVTHITGGNFAQSSITINGWLRDFLWAQASQVIQSYGSSLSAYGLFFLGAHFVWAFSLMFLFSGRGYWQELIESIVWAHNKLKVAPATQPRALSIVQGRAVGVTHYLLGGIATTWAFFLARIIAVG</sequence>
<dbReference type="EC" id="1.97.1.12" evidence="1"/>
<dbReference type="EMBL" id="DQ898156">
    <property type="protein sequence ID" value="ABI32424.1"/>
    <property type="molecule type" value="Genomic_DNA"/>
</dbReference>
<dbReference type="RefSeq" id="YP_740117.1">
    <property type="nucleotide sequence ID" value="NC_008325.1"/>
</dbReference>
<dbReference type="SMR" id="Q0G9W2"/>
<dbReference type="GeneID" id="4266735"/>
<dbReference type="OMA" id="TWAFFHA"/>
<dbReference type="GO" id="GO:0009535">
    <property type="term" value="C:chloroplast thylakoid membrane"/>
    <property type="evidence" value="ECO:0007669"/>
    <property type="project" value="UniProtKB-SubCell"/>
</dbReference>
<dbReference type="GO" id="GO:0009522">
    <property type="term" value="C:photosystem I"/>
    <property type="evidence" value="ECO:0007669"/>
    <property type="project" value="UniProtKB-KW"/>
</dbReference>
<dbReference type="GO" id="GO:0051539">
    <property type="term" value="F:4 iron, 4 sulfur cluster binding"/>
    <property type="evidence" value="ECO:0007669"/>
    <property type="project" value="UniProtKB-KW"/>
</dbReference>
<dbReference type="GO" id="GO:0016168">
    <property type="term" value="F:chlorophyll binding"/>
    <property type="evidence" value="ECO:0007669"/>
    <property type="project" value="UniProtKB-KW"/>
</dbReference>
<dbReference type="GO" id="GO:0009055">
    <property type="term" value="F:electron transfer activity"/>
    <property type="evidence" value="ECO:0007669"/>
    <property type="project" value="UniProtKB-UniRule"/>
</dbReference>
<dbReference type="GO" id="GO:0000287">
    <property type="term" value="F:magnesium ion binding"/>
    <property type="evidence" value="ECO:0007669"/>
    <property type="project" value="UniProtKB-UniRule"/>
</dbReference>
<dbReference type="GO" id="GO:0016491">
    <property type="term" value="F:oxidoreductase activity"/>
    <property type="evidence" value="ECO:0007669"/>
    <property type="project" value="UniProtKB-KW"/>
</dbReference>
<dbReference type="GO" id="GO:0015979">
    <property type="term" value="P:photosynthesis"/>
    <property type="evidence" value="ECO:0007669"/>
    <property type="project" value="UniProtKB-UniRule"/>
</dbReference>
<dbReference type="FunFam" id="1.20.1130.10:FF:000001">
    <property type="entry name" value="Photosystem I P700 chlorophyll a apoprotein A2"/>
    <property type="match status" value="1"/>
</dbReference>
<dbReference type="Gene3D" id="1.20.1130.10">
    <property type="entry name" value="Photosystem I PsaA/PsaB"/>
    <property type="match status" value="1"/>
</dbReference>
<dbReference type="HAMAP" id="MF_00458">
    <property type="entry name" value="PSI_PsaA"/>
    <property type="match status" value="1"/>
</dbReference>
<dbReference type="InterPro" id="IPR006243">
    <property type="entry name" value="PSI_PsaA"/>
</dbReference>
<dbReference type="InterPro" id="IPR001280">
    <property type="entry name" value="PSI_PsaA/B"/>
</dbReference>
<dbReference type="InterPro" id="IPR020586">
    <property type="entry name" value="PSI_PsaA/B_CS"/>
</dbReference>
<dbReference type="InterPro" id="IPR036408">
    <property type="entry name" value="PSI_PsaA/B_sf"/>
</dbReference>
<dbReference type="NCBIfam" id="TIGR01335">
    <property type="entry name" value="psaA"/>
    <property type="match status" value="1"/>
</dbReference>
<dbReference type="PANTHER" id="PTHR30128">
    <property type="entry name" value="OUTER MEMBRANE PROTEIN, OMPA-RELATED"/>
    <property type="match status" value="1"/>
</dbReference>
<dbReference type="PANTHER" id="PTHR30128:SF19">
    <property type="entry name" value="PHOTOSYSTEM I P700 CHLOROPHYLL A APOPROTEIN A1-RELATED"/>
    <property type="match status" value="1"/>
</dbReference>
<dbReference type="Pfam" id="PF00223">
    <property type="entry name" value="PsaA_PsaB"/>
    <property type="match status" value="1"/>
</dbReference>
<dbReference type="PIRSF" id="PIRSF002905">
    <property type="entry name" value="PSI_A"/>
    <property type="match status" value="1"/>
</dbReference>
<dbReference type="PRINTS" id="PR00257">
    <property type="entry name" value="PHOTSYSPSAAB"/>
</dbReference>
<dbReference type="SUPFAM" id="SSF81558">
    <property type="entry name" value="Photosystem I subunits PsaA/PsaB"/>
    <property type="match status" value="1"/>
</dbReference>
<dbReference type="PROSITE" id="PS00419">
    <property type="entry name" value="PHOTOSYSTEM_I_PSAAB"/>
    <property type="match status" value="1"/>
</dbReference>
<proteinExistence type="inferred from homology"/>
<protein>
    <recommendedName>
        <fullName evidence="1">Photosystem I P700 chlorophyll a apoprotein A1</fullName>
        <ecNumber evidence="1">1.97.1.12</ecNumber>
    </recommendedName>
    <alternativeName>
        <fullName evidence="1">PSI-A</fullName>
    </alternativeName>
    <alternativeName>
        <fullName evidence="1">PsaA</fullName>
    </alternativeName>
</protein>
<gene>
    <name evidence="1" type="primary">psaA</name>
</gene>
<name>PSAA_DAUCA</name>
<comment type="function">
    <text>PsaA and PsaB bind P700, the primary electron donor of photosystem I (PSI), as well as the electron acceptors A0, A1 and FX. PSI is a plastocyanin-ferredoxin oxidoreductase, converting photonic excitation into a charge separation, which transfers an electron from the donor P700 chlorophyll pair to the spectroscopically characterized acceptors A0, A1, FX, FA and FB in turn. Oxidized P700 is reduced on the lumenal side of the thylakoid membrane by plastocyanin.</text>
</comment>
<comment type="catalytic activity">
    <reaction evidence="1">
        <text>reduced [plastocyanin] + hnu + oxidized [2Fe-2S]-[ferredoxin] = oxidized [plastocyanin] + reduced [2Fe-2S]-[ferredoxin]</text>
        <dbReference type="Rhea" id="RHEA:30407"/>
        <dbReference type="Rhea" id="RHEA-COMP:10000"/>
        <dbReference type="Rhea" id="RHEA-COMP:10001"/>
        <dbReference type="Rhea" id="RHEA-COMP:10039"/>
        <dbReference type="Rhea" id="RHEA-COMP:10040"/>
        <dbReference type="ChEBI" id="CHEBI:29036"/>
        <dbReference type="ChEBI" id="CHEBI:30212"/>
        <dbReference type="ChEBI" id="CHEBI:33737"/>
        <dbReference type="ChEBI" id="CHEBI:33738"/>
        <dbReference type="ChEBI" id="CHEBI:49552"/>
        <dbReference type="EC" id="1.97.1.12"/>
    </reaction>
</comment>
<comment type="cofactor">
    <text evidence="1">P700 is a chlorophyll a/chlorophyll a' dimer, A0 is one or more chlorophyll a, A1 is one or both phylloquinones and FX is a shared 4Fe-4S iron-sulfur center.</text>
</comment>
<comment type="subunit">
    <text evidence="1">The PsaA/B heterodimer binds the P700 chlorophyll special pair and subsequent electron acceptors. PSI consists of a core antenna complex that captures photons, and an electron transfer chain that converts photonic excitation into a charge separation. The eukaryotic PSI reaction center is composed of at least 11 subunits.</text>
</comment>
<comment type="subcellular location">
    <subcellularLocation>
        <location evidence="1">Plastid</location>
        <location evidence="1">Chloroplast thylakoid membrane</location>
        <topology evidence="1">Multi-pass membrane protein</topology>
    </subcellularLocation>
</comment>
<comment type="similarity">
    <text evidence="1">Belongs to the PsaA/PsaB family.</text>
</comment>
<keyword id="KW-0004">4Fe-4S</keyword>
<keyword id="KW-0148">Chlorophyll</keyword>
<keyword id="KW-0150">Chloroplast</keyword>
<keyword id="KW-0157">Chromophore</keyword>
<keyword id="KW-0249">Electron transport</keyword>
<keyword id="KW-0408">Iron</keyword>
<keyword id="KW-0411">Iron-sulfur</keyword>
<keyword id="KW-0460">Magnesium</keyword>
<keyword id="KW-0472">Membrane</keyword>
<keyword id="KW-0479">Metal-binding</keyword>
<keyword id="KW-0560">Oxidoreductase</keyword>
<keyword id="KW-0602">Photosynthesis</keyword>
<keyword id="KW-0603">Photosystem I</keyword>
<keyword id="KW-0934">Plastid</keyword>
<keyword id="KW-0793">Thylakoid</keyword>
<keyword id="KW-0812">Transmembrane</keyword>
<keyword id="KW-1133">Transmembrane helix</keyword>
<keyword id="KW-0813">Transport</keyword>
<geneLocation type="chloroplast"/>
<feature type="chain" id="PRO_0000275941" description="Photosystem I P700 chlorophyll a apoprotein A1">
    <location>
        <begin position="1"/>
        <end position="750"/>
    </location>
</feature>
<feature type="transmembrane region" description="Helical; Name=I" evidence="1">
    <location>
        <begin position="70"/>
        <end position="93"/>
    </location>
</feature>
<feature type="transmembrane region" description="Helical; Name=II" evidence="1">
    <location>
        <begin position="156"/>
        <end position="179"/>
    </location>
</feature>
<feature type="transmembrane region" description="Helical; Name=III" evidence="1">
    <location>
        <begin position="195"/>
        <end position="219"/>
    </location>
</feature>
<feature type="transmembrane region" description="Helical; Name=IV" evidence="1">
    <location>
        <begin position="291"/>
        <end position="309"/>
    </location>
</feature>
<feature type="transmembrane region" description="Helical; Name=V" evidence="1">
    <location>
        <begin position="346"/>
        <end position="369"/>
    </location>
</feature>
<feature type="transmembrane region" description="Helical; Name=VI" evidence="1">
    <location>
        <begin position="385"/>
        <end position="411"/>
    </location>
</feature>
<feature type="transmembrane region" description="Helical; Name=VII" evidence="1">
    <location>
        <begin position="433"/>
        <end position="455"/>
    </location>
</feature>
<feature type="transmembrane region" description="Helical; Name=VIII" evidence="1">
    <location>
        <begin position="531"/>
        <end position="549"/>
    </location>
</feature>
<feature type="transmembrane region" description="Helical; Name=IX" evidence="1">
    <location>
        <begin position="589"/>
        <end position="610"/>
    </location>
</feature>
<feature type="transmembrane region" description="Helical; Name=X" evidence="1">
    <location>
        <begin position="664"/>
        <end position="686"/>
    </location>
</feature>
<feature type="transmembrane region" description="Helical; Name=XI" evidence="1">
    <location>
        <begin position="724"/>
        <end position="744"/>
    </location>
</feature>
<feature type="binding site" evidence="1">
    <location>
        <position position="573"/>
    </location>
    <ligand>
        <name>[4Fe-4S] cluster</name>
        <dbReference type="ChEBI" id="CHEBI:49883"/>
        <note>ligand shared between dimeric partners</note>
    </ligand>
</feature>
<feature type="binding site" evidence="1">
    <location>
        <position position="582"/>
    </location>
    <ligand>
        <name>[4Fe-4S] cluster</name>
        <dbReference type="ChEBI" id="CHEBI:49883"/>
        <note>ligand shared between dimeric partners</note>
    </ligand>
</feature>
<feature type="binding site" description="axial binding residue" evidence="1">
    <location>
        <position position="675"/>
    </location>
    <ligand>
        <name>chlorophyll a'</name>
        <dbReference type="ChEBI" id="CHEBI:189419"/>
        <label>A1</label>
    </ligand>
    <ligandPart>
        <name>Mg</name>
        <dbReference type="ChEBI" id="CHEBI:25107"/>
    </ligandPart>
</feature>
<feature type="binding site" description="axial binding residue" evidence="1">
    <location>
        <position position="683"/>
    </location>
    <ligand>
        <name>chlorophyll a</name>
        <dbReference type="ChEBI" id="CHEBI:58416"/>
        <label>A3</label>
    </ligand>
    <ligandPart>
        <name>Mg</name>
        <dbReference type="ChEBI" id="CHEBI:25107"/>
    </ligandPart>
</feature>
<feature type="binding site" evidence="1">
    <location>
        <position position="691"/>
    </location>
    <ligand>
        <name>chlorophyll a</name>
        <dbReference type="ChEBI" id="CHEBI:58416"/>
        <label>A3</label>
    </ligand>
</feature>
<feature type="binding site" evidence="1">
    <location>
        <position position="692"/>
    </location>
    <ligand>
        <name>phylloquinone</name>
        <dbReference type="ChEBI" id="CHEBI:18067"/>
        <label>A</label>
    </ligand>
</feature>
<organism>
    <name type="scientific">Daucus carota</name>
    <name type="common">Wild carrot</name>
    <dbReference type="NCBI Taxonomy" id="4039"/>
    <lineage>
        <taxon>Eukaryota</taxon>
        <taxon>Viridiplantae</taxon>
        <taxon>Streptophyta</taxon>
        <taxon>Embryophyta</taxon>
        <taxon>Tracheophyta</taxon>
        <taxon>Spermatophyta</taxon>
        <taxon>Magnoliopsida</taxon>
        <taxon>eudicotyledons</taxon>
        <taxon>Gunneridae</taxon>
        <taxon>Pentapetalae</taxon>
        <taxon>asterids</taxon>
        <taxon>campanulids</taxon>
        <taxon>Apiales</taxon>
        <taxon>Apiaceae</taxon>
        <taxon>Apioideae</taxon>
        <taxon>Scandiceae</taxon>
        <taxon>Daucinae</taxon>
        <taxon>Daucus</taxon>
        <taxon>Daucus sect. Daucus</taxon>
    </lineage>
</organism>